<reference key="1">
    <citation type="journal article" date="2002" name="Proc. Natl. Acad. Sci. U.S.A.">
        <title>Extensive mosaic structure revealed by the complete genome sequence of uropathogenic Escherichia coli.</title>
        <authorList>
            <person name="Welch R.A."/>
            <person name="Burland V."/>
            <person name="Plunkett G. III"/>
            <person name="Redford P."/>
            <person name="Roesch P."/>
            <person name="Rasko D."/>
            <person name="Buckles E.L."/>
            <person name="Liou S.-R."/>
            <person name="Boutin A."/>
            <person name="Hackett J."/>
            <person name="Stroud D."/>
            <person name="Mayhew G.F."/>
            <person name="Rose D.J."/>
            <person name="Zhou S."/>
            <person name="Schwartz D.C."/>
            <person name="Perna N.T."/>
            <person name="Mobley H.L.T."/>
            <person name="Donnenberg M.S."/>
            <person name="Blattner F.R."/>
        </authorList>
    </citation>
    <scope>NUCLEOTIDE SEQUENCE [LARGE SCALE GENOMIC DNA]</scope>
    <source>
        <strain>CFT073 / ATCC 700928 / UPEC</strain>
    </source>
</reference>
<gene>
    <name evidence="1" type="primary">murQ</name>
    <name type="synonym">yfeU</name>
    <name type="ordered locus">c2961</name>
</gene>
<evidence type="ECO:0000255" key="1">
    <source>
        <dbReference type="HAMAP-Rule" id="MF_00068"/>
    </source>
</evidence>
<protein>
    <recommendedName>
        <fullName evidence="1">N-acetylmuramic acid 6-phosphate etherase</fullName>
        <shortName evidence="1">MurNAc-6-P etherase</shortName>
        <ecNumber evidence="1">4.2.1.126</ecNumber>
    </recommendedName>
    <alternativeName>
        <fullName evidence="1">N-acetylmuramic acid 6-phosphate hydrolase</fullName>
    </alternativeName>
    <alternativeName>
        <fullName evidence="1">N-acetylmuramic acid 6-phosphate lyase</fullName>
    </alternativeName>
</protein>
<accession>Q8FFB0</accession>
<keyword id="KW-0119">Carbohydrate metabolism</keyword>
<keyword id="KW-0456">Lyase</keyword>
<keyword id="KW-1185">Reference proteome</keyword>
<proteinExistence type="inferred from homology"/>
<dbReference type="EC" id="4.2.1.126" evidence="1"/>
<dbReference type="EMBL" id="AE014075">
    <property type="protein sequence ID" value="AAN81411.1"/>
    <property type="molecule type" value="Genomic_DNA"/>
</dbReference>
<dbReference type="RefSeq" id="WP_001175629.1">
    <property type="nucleotide sequence ID" value="NZ_CP051263.1"/>
</dbReference>
<dbReference type="SMR" id="Q8FFB0"/>
<dbReference type="STRING" id="199310.c2961"/>
<dbReference type="KEGG" id="ecc:c2961"/>
<dbReference type="eggNOG" id="COG2103">
    <property type="taxonomic scope" value="Bacteria"/>
</dbReference>
<dbReference type="HOGENOM" id="CLU_049049_1_1_6"/>
<dbReference type="BioCyc" id="ECOL199310:C2961-MONOMER"/>
<dbReference type="UniPathway" id="UPA00342"/>
<dbReference type="UniPathway" id="UPA00343"/>
<dbReference type="UniPathway" id="UPA00544"/>
<dbReference type="Proteomes" id="UP000001410">
    <property type="component" value="Chromosome"/>
</dbReference>
<dbReference type="GO" id="GO:0097367">
    <property type="term" value="F:carbohydrate derivative binding"/>
    <property type="evidence" value="ECO:0007669"/>
    <property type="project" value="InterPro"/>
</dbReference>
<dbReference type="GO" id="GO:0016835">
    <property type="term" value="F:carbon-oxygen lyase activity"/>
    <property type="evidence" value="ECO:0007669"/>
    <property type="project" value="UniProtKB-UniRule"/>
</dbReference>
<dbReference type="GO" id="GO:0016803">
    <property type="term" value="F:ether hydrolase activity"/>
    <property type="evidence" value="ECO:0007669"/>
    <property type="project" value="TreeGrafter"/>
</dbReference>
<dbReference type="GO" id="GO:0097175">
    <property type="term" value="P:1,6-anhydro-N-acetyl-beta-muramic acid catabolic process"/>
    <property type="evidence" value="ECO:0007669"/>
    <property type="project" value="UniProtKB-UniRule"/>
</dbReference>
<dbReference type="GO" id="GO:0046348">
    <property type="term" value="P:amino sugar catabolic process"/>
    <property type="evidence" value="ECO:0007669"/>
    <property type="project" value="InterPro"/>
</dbReference>
<dbReference type="GO" id="GO:0097173">
    <property type="term" value="P:N-acetylmuramic acid catabolic process"/>
    <property type="evidence" value="ECO:0007669"/>
    <property type="project" value="UniProtKB-UniPathway"/>
</dbReference>
<dbReference type="GO" id="GO:0009254">
    <property type="term" value="P:peptidoglycan turnover"/>
    <property type="evidence" value="ECO:0007669"/>
    <property type="project" value="UniProtKB-UniRule"/>
</dbReference>
<dbReference type="CDD" id="cd05007">
    <property type="entry name" value="SIS_Etherase"/>
    <property type="match status" value="1"/>
</dbReference>
<dbReference type="FunFam" id="1.10.8.1080:FF:000001">
    <property type="entry name" value="N-acetylmuramic acid 6-phosphate etherase"/>
    <property type="match status" value="1"/>
</dbReference>
<dbReference type="FunFam" id="3.40.50.10490:FF:000014">
    <property type="entry name" value="N-acetylmuramic acid 6-phosphate etherase"/>
    <property type="match status" value="1"/>
</dbReference>
<dbReference type="Gene3D" id="1.10.8.1080">
    <property type="match status" value="1"/>
</dbReference>
<dbReference type="Gene3D" id="3.40.50.10490">
    <property type="entry name" value="Glucose-6-phosphate isomerase like protein, domain 1"/>
    <property type="match status" value="1"/>
</dbReference>
<dbReference type="HAMAP" id="MF_00068">
    <property type="entry name" value="MurQ"/>
    <property type="match status" value="1"/>
</dbReference>
<dbReference type="InterPro" id="IPR005488">
    <property type="entry name" value="Etherase_MurQ"/>
</dbReference>
<dbReference type="InterPro" id="IPR005486">
    <property type="entry name" value="Glucokinase_regulatory_CS"/>
</dbReference>
<dbReference type="InterPro" id="IPR040190">
    <property type="entry name" value="MURQ/GCKR"/>
</dbReference>
<dbReference type="InterPro" id="IPR001347">
    <property type="entry name" value="SIS_dom"/>
</dbReference>
<dbReference type="InterPro" id="IPR046348">
    <property type="entry name" value="SIS_dom_sf"/>
</dbReference>
<dbReference type="NCBIfam" id="TIGR00274">
    <property type="entry name" value="N-acetylmuramic acid 6-phosphate etherase"/>
    <property type="match status" value="1"/>
</dbReference>
<dbReference type="NCBIfam" id="NF003915">
    <property type="entry name" value="PRK05441.1"/>
    <property type="match status" value="1"/>
</dbReference>
<dbReference type="NCBIfam" id="NF009222">
    <property type="entry name" value="PRK12570.1"/>
    <property type="match status" value="1"/>
</dbReference>
<dbReference type="PANTHER" id="PTHR10088">
    <property type="entry name" value="GLUCOKINASE REGULATORY PROTEIN"/>
    <property type="match status" value="1"/>
</dbReference>
<dbReference type="PANTHER" id="PTHR10088:SF4">
    <property type="entry name" value="GLUCOKINASE REGULATORY PROTEIN"/>
    <property type="match status" value="1"/>
</dbReference>
<dbReference type="Pfam" id="PF22645">
    <property type="entry name" value="GKRP_SIS_N"/>
    <property type="match status" value="1"/>
</dbReference>
<dbReference type="SUPFAM" id="SSF53697">
    <property type="entry name" value="SIS domain"/>
    <property type="match status" value="1"/>
</dbReference>
<dbReference type="PROSITE" id="PS01272">
    <property type="entry name" value="GCKR"/>
    <property type="match status" value="1"/>
</dbReference>
<dbReference type="PROSITE" id="PS51464">
    <property type="entry name" value="SIS"/>
    <property type="match status" value="1"/>
</dbReference>
<feature type="chain" id="PRO_0000214831" description="N-acetylmuramic acid 6-phosphate etherase">
    <location>
        <begin position="1"/>
        <end position="298"/>
    </location>
</feature>
<feature type="domain" description="SIS" evidence="1">
    <location>
        <begin position="55"/>
        <end position="218"/>
    </location>
</feature>
<feature type="active site" description="Proton donor" evidence="1">
    <location>
        <position position="83"/>
    </location>
</feature>
<feature type="active site" evidence="1">
    <location>
        <position position="114"/>
    </location>
</feature>
<sequence length="298" mass="31105">MQLEKMITEGSNAASAEIDRVSTLEMCRIINDEDKTVPLAVERVLPDIAAAIDVIHTQVSGGGRLIYLGAGTSGRLGILDASECPPTYGVKPGLVVGLIAGGEYAIQHAVEGAEDSREGGVNDLKNIGLTAQDVVVGIAASGRTPYVIAGLEYARQLGCRTVGISCNPGSAVSSTAEFAITPVVGAEVVTGSSRMKAGTAQKLVLNMLSTGLMIKSGKVFGNLMVDVVATNEKLHVRQVNIVKNATGCNAEQAEAALIACERNCKTAIVMVLKNLDADEAKKCLDQHGGFIRKALEKE</sequence>
<comment type="function">
    <text evidence="1">Specifically catalyzes the cleavage of the D-lactyl ether substituent of MurNAc 6-phosphate, producing GlcNAc 6-phosphate and D-lactate. Together with AnmK, is also required for the utilization of anhydro-N-acetylmuramic acid (anhMurNAc) either imported from the medium or derived from its own cell wall murein, and thus plays a role in cell wall recycling.</text>
</comment>
<comment type="catalytic activity">
    <reaction evidence="1">
        <text>N-acetyl-D-muramate 6-phosphate + H2O = N-acetyl-D-glucosamine 6-phosphate + (R)-lactate</text>
        <dbReference type="Rhea" id="RHEA:26410"/>
        <dbReference type="ChEBI" id="CHEBI:15377"/>
        <dbReference type="ChEBI" id="CHEBI:16004"/>
        <dbReference type="ChEBI" id="CHEBI:57513"/>
        <dbReference type="ChEBI" id="CHEBI:58722"/>
        <dbReference type="EC" id="4.2.1.126"/>
    </reaction>
</comment>
<comment type="pathway">
    <text evidence="1">Amino-sugar metabolism; 1,6-anhydro-N-acetylmuramate degradation.</text>
</comment>
<comment type="pathway">
    <text evidence="1">Amino-sugar metabolism; N-acetylmuramate degradation.</text>
</comment>
<comment type="pathway">
    <text evidence="1">Cell wall biogenesis; peptidoglycan recycling.</text>
</comment>
<comment type="subunit">
    <text evidence="1">Homodimer.</text>
</comment>
<comment type="induction">
    <text evidence="1">Induced by MurNAc 6-phosphate that releases the repressor MurR from the DNA. Repressed by MurR in the absence of MurNAc 6-phosphate.</text>
</comment>
<comment type="miscellaneous">
    <text evidence="1">A lyase-type mechanism (elimination/hydration) is suggested for the cleavage of the lactyl ether bond of MurNAc 6-phosphate, with the formation of an alpha,beta-unsaturated aldehyde intermediate with (E)-stereochemistry, followed by the syn addition of water to give product.</text>
</comment>
<comment type="similarity">
    <text evidence="1">Belongs to the GCKR-like family. MurNAc-6-P etherase subfamily.</text>
</comment>
<name>MURQ_ECOL6</name>
<organism>
    <name type="scientific">Escherichia coli O6:H1 (strain CFT073 / ATCC 700928 / UPEC)</name>
    <dbReference type="NCBI Taxonomy" id="199310"/>
    <lineage>
        <taxon>Bacteria</taxon>
        <taxon>Pseudomonadati</taxon>
        <taxon>Pseudomonadota</taxon>
        <taxon>Gammaproteobacteria</taxon>
        <taxon>Enterobacterales</taxon>
        <taxon>Enterobacteriaceae</taxon>
        <taxon>Escherichia</taxon>
    </lineage>
</organism>